<organism>
    <name type="scientific">Neurospora crassa (strain ATCC 24698 / 74-OR23-1A / CBS 708.71 / DSM 1257 / FGSC 987)</name>
    <dbReference type="NCBI Taxonomy" id="367110"/>
    <lineage>
        <taxon>Eukaryota</taxon>
        <taxon>Fungi</taxon>
        <taxon>Dikarya</taxon>
        <taxon>Ascomycota</taxon>
        <taxon>Pezizomycotina</taxon>
        <taxon>Sordariomycetes</taxon>
        <taxon>Sordariomycetidae</taxon>
        <taxon>Sordariales</taxon>
        <taxon>Sordariaceae</taxon>
        <taxon>Neurospora</taxon>
    </lineage>
</organism>
<accession>Q01372</accession>
<accession>Q6MVV8</accession>
<accession>Q7RVL6</accession>
<comment type="function">
    <text>This protein promotes the GTP-dependent binding of aminoacyl-tRNA to the A-site of ribosomes during protein biosynthesis.</text>
</comment>
<comment type="subcellular location">
    <subcellularLocation>
        <location>Cytoplasm</location>
    </subcellularLocation>
</comment>
<comment type="similarity">
    <text evidence="3">Belongs to the TRAFAC class translation factor GTPase superfamily. Classic translation factor GTPase family. EF-Tu/EF-1A subfamily.</text>
</comment>
<keyword id="KW-0963">Cytoplasm</keyword>
<keyword id="KW-0251">Elongation factor</keyword>
<keyword id="KW-0342">GTP-binding</keyword>
<keyword id="KW-0488">Methylation</keyword>
<keyword id="KW-0547">Nucleotide-binding</keyword>
<keyword id="KW-0648">Protein biosynthesis</keyword>
<keyword id="KW-1185">Reference proteome</keyword>
<feature type="initiator methionine" description="Removed" evidence="2">
    <location>
        <position position="1"/>
    </location>
</feature>
<feature type="chain" id="PRO_0000090959" description="Elongation factor 1-alpha">
    <location>
        <begin position="2"/>
        <end position="460"/>
    </location>
</feature>
<feature type="domain" description="tr-type G">
    <location>
        <begin position="6"/>
        <end position="241"/>
    </location>
</feature>
<feature type="region of interest" description="G1" evidence="1">
    <location>
        <begin position="15"/>
        <end position="22"/>
    </location>
</feature>
<feature type="region of interest" description="G2" evidence="1">
    <location>
        <begin position="71"/>
        <end position="75"/>
    </location>
</feature>
<feature type="region of interest" description="G3" evidence="1">
    <location>
        <begin position="92"/>
        <end position="95"/>
    </location>
</feature>
<feature type="region of interest" description="G4" evidence="1">
    <location>
        <begin position="154"/>
        <end position="157"/>
    </location>
</feature>
<feature type="region of interest" description="G5" evidence="1">
    <location>
        <begin position="193"/>
        <end position="195"/>
    </location>
</feature>
<feature type="binding site" evidence="1">
    <location>
        <begin position="15"/>
        <end position="22"/>
    </location>
    <ligand>
        <name>GTP</name>
        <dbReference type="ChEBI" id="CHEBI:37565"/>
    </ligand>
</feature>
<feature type="binding site" evidence="1">
    <location>
        <begin position="92"/>
        <end position="96"/>
    </location>
    <ligand>
        <name>GTP</name>
        <dbReference type="ChEBI" id="CHEBI:37565"/>
    </ligand>
</feature>
<feature type="binding site" evidence="1">
    <location>
        <begin position="154"/>
        <end position="157"/>
    </location>
    <ligand>
        <name>GTP</name>
        <dbReference type="ChEBI" id="CHEBI:37565"/>
    </ligand>
</feature>
<feature type="modified residue" description="N,N,N-trimethylglycine" evidence="2">
    <location>
        <position position="2"/>
    </location>
</feature>
<feature type="modified residue" description="N6,N6-dimethyllysine; alternate" evidence="2">
    <location>
        <position position="3"/>
    </location>
</feature>
<feature type="modified residue" description="N6-methyllysine; alternate" evidence="2">
    <location>
        <position position="3"/>
    </location>
</feature>
<feature type="modified residue" description="N6-methyllysine" evidence="2">
    <location>
        <position position="31"/>
    </location>
</feature>
<feature type="modified residue" description="N6,N6,N6-trimethyllysine" evidence="2">
    <location>
        <position position="80"/>
    </location>
</feature>
<feature type="modified residue" description="N6,N6-dimethyllysine; alternate" evidence="2">
    <location>
        <position position="317"/>
    </location>
</feature>
<feature type="modified residue" description="N6-methyllysine; alternate" evidence="2">
    <location>
        <position position="317"/>
    </location>
</feature>
<feature type="modified residue" description="N6-methyllysine" evidence="2">
    <location>
        <position position="391"/>
    </location>
</feature>
<feature type="sequence conflict" description="In Ref. 1; BAA08274." evidence="3" ref="1">
    <original>G</original>
    <variation>R</variation>
    <location>
        <position position="355"/>
    </location>
</feature>
<proteinExistence type="inferred from homology"/>
<dbReference type="EMBL" id="D45837">
    <property type="protein sequence ID" value="BAA08274.1"/>
    <property type="molecule type" value="Genomic_DNA"/>
</dbReference>
<dbReference type="EMBL" id="BX842622">
    <property type="protein sequence ID" value="CAE76188.1"/>
    <property type="molecule type" value="Genomic_DNA"/>
</dbReference>
<dbReference type="EMBL" id="CM002236">
    <property type="protein sequence ID" value="EAA35632.2"/>
    <property type="molecule type" value="Genomic_DNA"/>
</dbReference>
<dbReference type="PIR" id="T47258">
    <property type="entry name" value="T47258"/>
</dbReference>
<dbReference type="RefSeq" id="XP_964868.2">
    <property type="nucleotide sequence ID" value="XM_959775.3"/>
</dbReference>
<dbReference type="SMR" id="Q01372"/>
<dbReference type="FunCoup" id="Q01372">
    <property type="interactions" value="1535"/>
</dbReference>
<dbReference type="STRING" id="367110.Q01372"/>
<dbReference type="PaxDb" id="5141-EFNCRP00000001234"/>
<dbReference type="EnsemblFungi" id="EAA35632">
    <property type="protein sequence ID" value="EAA35632"/>
    <property type="gene ID" value="NCU02003"/>
</dbReference>
<dbReference type="GeneID" id="3881008"/>
<dbReference type="KEGG" id="ncr:NCU02003"/>
<dbReference type="VEuPathDB" id="FungiDB:NCU02003"/>
<dbReference type="HOGENOM" id="CLU_007265_3_5_1"/>
<dbReference type="InParanoid" id="Q01372"/>
<dbReference type="OrthoDB" id="342024at2759"/>
<dbReference type="Proteomes" id="UP000001805">
    <property type="component" value="Chromosome 1, Linkage Group I"/>
</dbReference>
<dbReference type="GO" id="GO:0005737">
    <property type="term" value="C:cytoplasm"/>
    <property type="evidence" value="ECO:0007669"/>
    <property type="project" value="UniProtKB-SubCell"/>
</dbReference>
<dbReference type="GO" id="GO:0005525">
    <property type="term" value="F:GTP binding"/>
    <property type="evidence" value="ECO:0007669"/>
    <property type="project" value="UniProtKB-KW"/>
</dbReference>
<dbReference type="GO" id="GO:0003924">
    <property type="term" value="F:GTPase activity"/>
    <property type="evidence" value="ECO:0000318"/>
    <property type="project" value="GO_Central"/>
</dbReference>
<dbReference type="GO" id="GO:0003746">
    <property type="term" value="F:translation elongation factor activity"/>
    <property type="evidence" value="ECO:0000318"/>
    <property type="project" value="GO_Central"/>
</dbReference>
<dbReference type="GO" id="GO:0006412">
    <property type="term" value="P:translation"/>
    <property type="evidence" value="ECO:0000318"/>
    <property type="project" value="GO_Central"/>
</dbReference>
<dbReference type="GO" id="GO:0006414">
    <property type="term" value="P:translational elongation"/>
    <property type="evidence" value="ECO:0000318"/>
    <property type="project" value="GO_Central"/>
</dbReference>
<dbReference type="CDD" id="cd01883">
    <property type="entry name" value="EF1_alpha"/>
    <property type="match status" value="1"/>
</dbReference>
<dbReference type="CDD" id="cd03693">
    <property type="entry name" value="EF1_alpha_II"/>
    <property type="match status" value="1"/>
</dbReference>
<dbReference type="CDD" id="cd03705">
    <property type="entry name" value="EF1_alpha_III"/>
    <property type="match status" value="1"/>
</dbReference>
<dbReference type="FunFam" id="2.40.30.10:FF:000003">
    <property type="entry name" value="Elongation factor 1-alpha"/>
    <property type="match status" value="1"/>
</dbReference>
<dbReference type="FunFam" id="2.40.30.10:FF:000005">
    <property type="entry name" value="Elongation factor 1-alpha"/>
    <property type="match status" value="1"/>
</dbReference>
<dbReference type="FunFam" id="3.40.50.300:FF:000211">
    <property type="entry name" value="Elongation factor 1-alpha"/>
    <property type="match status" value="1"/>
</dbReference>
<dbReference type="Gene3D" id="3.40.50.300">
    <property type="entry name" value="P-loop containing nucleotide triphosphate hydrolases"/>
    <property type="match status" value="1"/>
</dbReference>
<dbReference type="Gene3D" id="2.40.30.10">
    <property type="entry name" value="Translation factors"/>
    <property type="match status" value="2"/>
</dbReference>
<dbReference type="HAMAP" id="MF_00118_A">
    <property type="entry name" value="EF_Tu_A"/>
    <property type="match status" value="1"/>
</dbReference>
<dbReference type="InterPro" id="IPR004161">
    <property type="entry name" value="EFTu-like_2"/>
</dbReference>
<dbReference type="InterPro" id="IPR031157">
    <property type="entry name" value="G_TR_CS"/>
</dbReference>
<dbReference type="InterPro" id="IPR054696">
    <property type="entry name" value="GTP-eEF1A_C"/>
</dbReference>
<dbReference type="InterPro" id="IPR027417">
    <property type="entry name" value="P-loop_NTPase"/>
</dbReference>
<dbReference type="InterPro" id="IPR000795">
    <property type="entry name" value="T_Tr_GTP-bd_dom"/>
</dbReference>
<dbReference type="InterPro" id="IPR050100">
    <property type="entry name" value="TRAFAC_GTPase_members"/>
</dbReference>
<dbReference type="InterPro" id="IPR009000">
    <property type="entry name" value="Transl_B-barrel_sf"/>
</dbReference>
<dbReference type="InterPro" id="IPR009001">
    <property type="entry name" value="Transl_elong_EF1A/Init_IF2_C"/>
</dbReference>
<dbReference type="InterPro" id="IPR004539">
    <property type="entry name" value="Transl_elong_EF1A_euk/arc"/>
</dbReference>
<dbReference type="NCBIfam" id="TIGR00483">
    <property type="entry name" value="EF-1_alpha"/>
    <property type="match status" value="1"/>
</dbReference>
<dbReference type="NCBIfam" id="NF008969">
    <property type="entry name" value="PRK12317.1"/>
    <property type="match status" value="1"/>
</dbReference>
<dbReference type="PANTHER" id="PTHR23115">
    <property type="entry name" value="TRANSLATION FACTOR"/>
    <property type="match status" value="1"/>
</dbReference>
<dbReference type="Pfam" id="PF22594">
    <property type="entry name" value="GTP-eEF1A_C"/>
    <property type="match status" value="1"/>
</dbReference>
<dbReference type="Pfam" id="PF00009">
    <property type="entry name" value="GTP_EFTU"/>
    <property type="match status" value="1"/>
</dbReference>
<dbReference type="Pfam" id="PF03144">
    <property type="entry name" value="GTP_EFTU_D2"/>
    <property type="match status" value="1"/>
</dbReference>
<dbReference type="PRINTS" id="PR00315">
    <property type="entry name" value="ELONGATNFCT"/>
</dbReference>
<dbReference type="SUPFAM" id="SSF50465">
    <property type="entry name" value="EF-Tu/eEF-1alpha/eIF2-gamma C-terminal domain"/>
    <property type="match status" value="1"/>
</dbReference>
<dbReference type="SUPFAM" id="SSF52540">
    <property type="entry name" value="P-loop containing nucleoside triphosphate hydrolases"/>
    <property type="match status" value="1"/>
</dbReference>
<dbReference type="SUPFAM" id="SSF50447">
    <property type="entry name" value="Translation proteins"/>
    <property type="match status" value="1"/>
</dbReference>
<dbReference type="PROSITE" id="PS00301">
    <property type="entry name" value="G_TR_1"/>
    <property type="match status" value="1"/>
</dbReference>
<dbReference type="PROSITE" id="PS51722">
    <property type="entry name" value="G_TR_2"/>
    <property type="match status" value="1"/>
</dbReference>
<reference key="1">
    <citation type="journal article" date="1995" name="Jpn. J. Genet.">
        <title>Cloning, nucleotide sequence, and expression of tef-1, the gene encoding translation elongation factor 1 alpha (EF-1 alpha) of Neurospora crassa.</title>
        <authorList>
            <person name="Ichi-Ishi A."/>
            <person name="Inoue H."/>
        </authorList>
    </citation>
    <scope>NUCLEOTIDE SEQUENCE [GENOMIC DNA]</scope>
</reference>
<reference key="2">
    <citation type="journal article" date="2003" name="Nucleic Acids Res.">
        <title>What's in the genome of a filamentous fungus? Analysis of the Neurospora genome sequence.</title>
        <authorList>
            <person name="Mannhaupt G."/>
            <person name="Montrone C."/>
            <person name="Haase D."/>
            <person name="Mewes H.-W."/>
            <person name="Aign V."/>
            <person name="Hoheisel J.D."/>
            <person name="Fartmann B."/>
            <person name="Nyakatura G."/>
            <person name="Kempken F."/>
            <person name="Maier J."/>
            <person name="Schulte U."/>
        </authorList>
    </citation>
    <scope>NUCLEOTIDE SEQUENCE [LARGE SCALE GENOMIC DNA]</scope>
    <source>
        <strain>ATCC 24698 / 74-OR23-1A / CBS 708.71 / DSM 1257 / FGSC 987</strain>
    </source>
</reference>
<reference key="3">
    <citation type="journal article" date="2003" name="Nature">
        <title>The genome sequence of the filamentous fungus Neurospora crassa.</title>
        <authorList>
            <person name="Galagan J.E."/>
            <person name="Calvo S.E."/>
            <person name="Borkovich K.A."/>
            <person name="Selker E.U."/>
            <person name="Read N.D."/>
            <person name="Jaffe D.B."/>
            <person name="FitzHugh W."/>
            <person name="Ma L.-J."/>
            <person name="Smirnov S."/>
            <person name="Purcell S."/>
            <person name="Rehman B."/>
            <person name="Elkins T."/>
            <person name="Engels R."/>
            <person name="Wang S."/>
            <person name="Nielsen C.B."/>
            <person name="Butler J."/>
            <person name="Endrizzi M."/>
            <person name="Qui D."/>
            <person name="Ianakiev P."/>
            <person name="Bell-Pedersen D."/>
            <person name="Nelson M.A."/>
            <person name="Werner-Washburne M."/>
            <person name="Selitrennikoff C.P."/>
            <person name="Kinsey J.A."/>
            <person name="Braun E.L."/>
            <person name="Zelter A."/>
            <person name="Schulte U."/>
            <person name="Kothe G.O."/>
            <person name="Jedd G."/>
            <person name="Mewes H.-W."/>
            <person name="Staben C."/>
            <person name="Marcotte E."/>
            <person name="Greenberg D."/>
            <person name="Roy A."/>
            <person name="Foley K."/>
            <person name="Naylor J."/>
            <person name="Stange-Thomann N."/>
            <person name="Barrett R."/>
            <person name="Gnerre S."/>
            <person name="Kamal M."/>
            <person name="Kamvysselis M."/>
            <person name="Mauceli E.W."/>
            <person name="Bielke C."/>
            <person name="Rudd S."/>
            <person name="Frishman D."/>
            <person name="Krystofova S."/>
            <person name="Rasmussen C."/>
            <person name="Metzenberg R.L."/>
            <person name="Perkins D.D."/>
            <person name="Kroken S."/>
            <person name="Cogoni C."/>
            <person name="Macino G."/>
            <person name="Catcheside D.E.A."/>
            <person name="Li W."/>
            <person name="Pratt R.J."/>
            <person name="Osmani S.A."/>
            <person name="DeSouza C.P.C."/>
            <person name="Glass N.L."/>
            <person name="Orbach M.J."/>
            <person name="Berglund J.A."/>
            <person name="Voelker R."/>
            <person name="Yarden O."/>
            <person name="Plamann M."/>
            <person name="Seiler S."/>
            <person name="Dunlap J.C."/>
            <person name="Radford A."/>
            <person name="Aramayo R."/>
            <person name="Natvig D.O."/>
            <person name="Alex L.A."/>
            <person name="Mannhaupt G."/>
            <person name="Ebbole D.J."/>
            <person name="Freitag M."/>
            <person name="Paulsen I."/>
            <person name="Sachs M.S."/>
            <person name="Lander E.S."/>
            <person name="Nusbaum C."/>
            <person name="Birren B.W."/>
        </authorList>
    </citation>
    <scope>NUCLEOTIDE SEQUENCE [LARGE SCALE GENOMIC DNA]</scope>
    <source>
        <strain>ATCC 24698 / 74-OR23-1A / CBS 708.71 / DSM 1257 / FGSC 987</strain>
    </source>
</reference>
<gene>
    <name type="primary">tef-1</name>
    <name type="ORF">B15B3.060</name>
    <name type="ORF">NCU02003</name>
</gene>
<protein>
    <recommendedName>
        <fullName>Elongation factor 1-alpha</fullName>
        <shortName>EF-1-alpha</shortName>
    </recommendedName>
</protein>
<name>EF1A_NEUCR</name>
<sequence>MGKEDKTHINVVVIGHVDSGKSTTTGHLIYKCGGIDKRTIEKFEKEAAELGKGSFKYAWVLDKLKAERERGITIDIALWKFETPKYYVTVIDAPGHRDFIKNMITGTSQADCAILIIAAGTGEFEAGISKDGQTREHALLAYTLGVKQLIVAINKMDTTQWSQTRFEEIIKETKNFIKKVGYNPAGVAFVPISGFNGDNMLEPSTNCPWYKGWEKETKAGKATGKTLLEAIDAIEPPKRPTDKPLRLPLQDVYKIGGIGTVPVGRIETGVLKPGMVVTFAPSNVTTEVKSVEMHHEQLAQGVPGDNVGFNVKNVSVKDIRRGNVAGDSKNDPPAGAASFTAQVIVLNHPGQVGAGYAPVLDCHTAHIACKFAELLEKIDRRTGKAVEASPKFIKSGDAAIVKMIPSKPMCVEAFTDYPPLGRFAVRDMRQTVAVGVIKAVDKSTAAAGKVTKSAAKAAKK</sequence>
<evidence type="ECO:0000250" key="1"/>
<evidence type="ECO:0000250" key="2">
    <source>
        <dbReference type="UniProtKB" id="P02994"/>
    </source>
</evidence>
<evidence type="ECO:0000305" key="3"/>